<dbReference type="EMBL" id="CP000901">
    <property type="protein sequence ID" value="ABX87569.1"/>
    <property type="molecule type" value="Genomic_DNA"/>
</dbReference>
<dbReference type="RefSeq" id="WP_002209636.1">
    <property type="nucleotide sequence ID" value="NZ_CP009935.1"/>
</dbReference>
<dbReference type="SMR" id="A9R4H2"/>
<dbReference type="GeneID" id="96663430"/>
<dbReference type="KEGG" id="ypg:YpAngola_A3795"/>
<dbReference type="PATRIC" id="fig|349746.12.peg.508"/>
<dbReference type="GO" id="GO:0005737">
    <property type="term" value="C:cytoplasm"/>
    <property type="evidence" value="ECO:0007669"/>
    <property type="project" value="UniProtKB-SubCell"/>
</dbReference>
<dbReference type="GO" id="GO:0050821">
    <property type="term" value="P:protein stabilization"/>
    <property type="evidence" value="ECO:0007669"/>
    <property type="project" value="UniProtKB-UniRule"/>
</dbReference>
<dbReference type="CDD" id="cd06470">
    <property type="entry name" value="ACD_IbpA-B_like"/>
    <property type="match status" value="1"/>
</dbReference>
<dbReference type="FunFam" id="2.60.40.790:FF:000002">
    <property type="entry name" value="Small heat shock protein IbpA"/>
    <property type="match status" value="1"/>
</dbReference>
<dbReference type="Gene3D" id="2.60.40.790">
    <property type="match status" value="1"/>
</dbReference>
<dbReference type="HAMAP" id="MF_02000">
    <property type="entry name" value="HSP20_IbpA"/>
    <property type="match status" value="1"/>
</dbReference>
<dbReference type="InterPro" id="IPR002068">
    <property type="entry name" value="A-crystallin/Hsp20_dom"/>
</dbReference>
<dbReference type="InterPro" id="IPR037913">
    <property type="entry name" value="ACD_IbpA/B"/>
</dbReference>
<dbReference type="InterPro" id="IPR008978">
    <property type="entry name" value="HSP20-like_chaperone"/>
</dbReference>
<dbReference type="InterPro" id="IPR023728">
    <property type="entry name" value="HSP20_IbpA"/>
</dbReference>
<dbReference type="NCBIfam" id="NF008013">
    <property type="entry name" value="PRK10743.1"/>
    <property type="match status" value="1"/>
</dbReference>
<dbReference type="PANTHER" id="PTHR47062">
    <property type="match status" value="1"/>
</dbReference>
<dbReference type="PANTHER" id="PTHR47062:SF1">
    <property type="entry name" value="SMALL HEAT SHOCK PROTEIN IBPA"/>
    <property type="match status" value="1"/>
</dbReference>
<dbReference type="Pfam" id="PF00011">
    <property type="entry name" value="HSP20"/>
    <property type="match status" value="1"/>
</dbReference>
<dbReference type="SUPFAM" id="SSF49764">
    <property type="entry name" value="HSP20-like chaperones"/>
    <property type="match status" value="1"/>
</dbReference>
<dbReference type="PROSITE" id="PS01031">
    <property type="entry name" value="SHSP"/>
    <property type="match status" value="1"/>
</dbReference>
<name>IBPA_YERPG</name>
<comment type="function">
    <text evidence="1">Associates with aggregated proteins, together with IbpB, to stabilize and protect them from irreversible denaturation and extensive proteolysis during heat shock and oxidative stress. Aggregated proteins bound to the IbpAB complex are more efficiently refolded and reactivated by the ATP-dependent chaperone systems ClpB and DnaK/DnaJ/GrpE. Its activity is ATP-independent.</text>
</comment>
<comment type="subunit">
    <text evidence="1">Monomer. Forms homomultimers of about 100-150 subunits at optimal growth temperatures. Conformation changes to monomers at high temperatures or high ionic concentrations.</text>
</comment>
<comment type="subcellular location">
    <subcellularLocation>
        <location evidence="1">Cytoplasm</location>
    </subcellularLocation>
</comment>
<comment type="similarity">
    <text evidence="1 2">Belongs to the small heat shock protein (HSP20) family.</text>
</comment>
<organism>
    <name type="scientific">Yersinia pestis bv. Antiqua (strain Angola)</name>
    <dbReference type="NCBI Taxonomy" id="349746"/>
    <lineage>
        <taxon>Bacteria</taxon>
        <taxon>Pseudomonadati</taxon>
        <taxon>Pseudomonadota</taxon>
        <taxon>Gammaproteobacteria</taxon>
        <taxon>Enterobacterales</taxon>
        <taxon>Yersiniaceae</taxon>
        <taxon>Yersinia</taxon>
    </lineage>
</organism>
<keyword id="KW-0143">Chaperone</keyword>
<keyword id="KW-0963">Cytoplasm</keyword>
<keyword id="KW-0346">Stress response</keyword>
<sequence length="137" mass="15648">MRNSDLAPLYRSAIGFDRLFNLLESGQNQSNGGYPPYNVELVDENNYRIAIAVAGFAEQELEITTQDNLLIVRGSHANEPAQRTYLYQGIAERNFERKFQLAEHIKIKGANLVNGLLYIDLERLVPESLKPRRIEIK</sequence>
<proteinExistence type="inferred from homology"/>
<protein>
    <recommendedName>
        <fullName evidence="1">Small heat shock protein IbpA</fullName>
    </recommendedName>
    <alternativeName>
        <fullName evidence="1">16 kDa heat shock protein A</fullName>
    </alternativeName>
</protein>
<reference key="1">
    <citation type="journal article" date="2010" name="J. Bacteriol.">
        <title>Genome sequence of the deep-rooted Yersinia pestis strain Angola reveals new insights into the evolution and pangenome of the plague bacterium.</title>
        <authorList>
            <person name="Eppinger M."/>
            <person name="Worsham P.L."/>
            <person name="Nikolich M.P."/>
            <person name="Riley D.R."/>
            <person name="Sebastian Y."/>
            <person name="Mou S."/>
            <person name="Achtman M."/>
            <person name="Lindler L.E."/>
            <person name="Ravel J."/>
        </authorList>
    </citation>
    <scope>NUCLEOTIDE SEQUENCE [LARGE SCALE GENOMIC DNA]</scope>
    <source>
        <strain>Angola</strain>
    </source>
</reference>
<gene>
    <name evidence="1" type="primary">ibpA</name>
    <name type="ordered locus">YpAngola_A3795</name>
</gene>
<evidence type="ECO:0000255" key="1">
    <source>
        <dbReference type="HAMAP-Rule" id="MF_02000"/>
    </source>
</evidence>
<evidence type="ECO:0000255" key="2">
    <source>
        <dbReference type="PROSITE-ProRule" id="PRU00285"/>
    </source>
</evidence>
<accession>A9R4H2</accession>
<feature type="chain" id="PRO_1000189093" description="Small heat shock protein IbpA">
    <location>
        <begin position="1"/>
        <end position="137"/>
    </location>
</feature>
<feature type="domain" description="sHSP" evidence="2">
    <location>
        <begin position="28"/>
        <end position="137"/>
    </location>
</feature>